<keyword id="KW-0067">ATP-binding</keyword>
<keyword id="KW-0963">Cytoplasm</keyword>
<keyword id="KW-0227">DNA damage</keyword>
<keyword id="KW-0233">DNA recombination</keyword>
<keyword id="KW-0234">DNA repair</keyword>
<keyword id="KW-0238">DNA-binding</keyword>
<keyword id="KW-0378">Hydrolase</keyword>
<keyword id="KW-0547">Nucleotide-binding</keyword>
<keyword id="KW-0742">SOS response</keyword>
<protein>
    <recommendedName>
        <fullName evidence="1">Holliday junction branch migration complex subunit RuvB</fullName>
        <ecNumber evidence="1">3.6.4.-</ecNumber>
    </recommendedName>
</protein>
<proteinExistence type="inferred from homology"/>
<dbReference type="EC" id="3.6.4.-" evidence="1"/>
<dbReference type="EMBL" id="CP000243">
    <property type="protein sequence ID" value="ABE07540.1"/>
    <property type="molecule type" value="Genomic_DNA"/>
</dbReference>
<dbReference type="RefSeq" id="WP_000568519.1">
    <property type="nucleotide sequence ID" value="NZ_CP064825.1"/>
</dbReference>
<dbReference type="SMR" id="Q1RAS4"/>
<dbReference type="GeneID" id="75202735"/>
<dbReference type="KEGG" id="eci:UTI89_C2064"/>
<dbReference type="HOGENOM" id="CLU_055599_1_0_6"/>
<dbReference type="Proteomes" id="UP000001952">
    <property type="component" value="Chromosome"/>
</dbReference>
<dbReference type="GO" id="GO:0005737">
    <property type="term" value="C:cytoplasm"/>
    <property type="evidence" value="ECO:0007669"/>
    <property type="project" value="UniProtKB-SubCell"/>
</dbReference>
<dbReference type="GO" id="GO:0048476">
    <property type="term" value="C:Holliday junction resolvase complex"/>
    <property type="evidence" value="ECO:0007669"/>
    <property type="project" value="UniProtKB-UniRule"/>
</dbReference>
<dbReference type="GO" id="GO:0005524">
    <property type="term" value="F:ATP binding"/>
    <property type="evidence" value="ECO:0007669"/>
    <property type="project" value="UniProtKB-UniRule"/>
</dbReference>
<dbReference type="GO" id="GO:0016887">
    <property type="term" value="F:ATP hydrolysis activity"/>
    <property type="evidence" value="ECO:0007669"/>
    <property type="project" value="InterPro"/>
</dbReference>
<dbReference type="GO" id="GO:0000400">
    <property type="term" value="F:four-way junction DNA binding"/>
    <property type="evidence" value="ECO:0007669"/>
    <property type="project" value="UniProtKB-UniRule"/>
</dbReference>
<dbReference type="GO" id="GO:0009378">
    <property type="term" value="F:four-way junction helicase activity"/>
    <property type="evidence" value="ECO:0007669"/>
    <property type="project" value="InterPro"/>
</dbReference>
<dbReference type="GO" id="GO:0006310">
    <property type="term" value="P:DNA recombination"/>
    <property type="evidence" value="ECO:0007669"/>
    <property type="project" value="UniProtKB-UniRule"/>
</dbReference>
<dbReference type="GO" id="GO:0006281">
    <property type="term" value="P:DNA repair"/>
    <property type="evidence" value="ECO:0007669"/>
    <property type="project" value="UniProtKB-UniRule"/>
</dbReference>
<dbReference type="GO" id="GO:0009432">
    <property type="term" value="P:SOS response"/>
    <property type="evidence" value="ECO:0007669"/>
    <property type="project" value="UniProtKB-UniRule"/>
</dbReference>
<dbReference type="CDD" id="cd00009">
    <property type="entry name" value="AAA"/>
    <property type="match status" value="1"/>
</dbReference>
<dbReference type="FunFam" id="1.10.10.10:FF:000086">
    <property type="entry name" value="Holliday junction ATP-dependent DNA helicase RuvB"/>
    <property type="match status" value="1"/>
</dbReference>
<dbReference type="FunFam" id="1.10.8.60:FF:000023">
    <property type="entry name" value="Holliday junction ATP-dependent DNA helicase RuvB"/>
    <property type="match status" value="1"/>
</dbReference>
<dbReference type="FunFam" id="3.40.50.300:FF:000073">
    <property type="entry name" value="Holliday junction ATP-dependent DNA helicase RuvB"/>
    <property type="match status" value="1"/>
</dbReference>
<dbReference type="Gene3D" id="1.10.8.60">
    <property type="match status" value="1"/>
</dbReference>
<dbReference type="Gene3D" id="3.40.50.300">
    <property type="entry name" value="P-loop containing nucleotide triphosphate hydrolases"/>
    <property type="match status" value="1"/>
</dbReference>
<dbReference type="Gene3D" id="1.10.10.10">
    <property type="entry name" value="Winged helix-like DNA-binding domain superfamily/Winged helix DNA-binding domain"/>
    <property type="match status" value="1"/>
</dbReference>
<dbReference type="HAMAP" id="MF_00016">
    <property type="entry name" value="DNA_HJ_migration_RuvB"/>
    <property type="match status" value="1"/>
</dbReference>
<dbReference type="InterPro" id="IPR003593">
    <property type="entry name" value="AAA+_ATPase"/>
</dbReference>
<dbReference type="InterPro" id="IPR041445">
    <property type="entry name" value="AAA_lid_4"/>
</dbReference>
<dbReference type="InterPro" id="IPR004605">
    <property type="entry name" value="DNA_helicase_Holl-junc_RuvB"/>
</dbReference>
<dbReference type="InterPro" id="IPR027417">
    <property type="entry name" value="P-loop_NTPase"/>
</dbReference>
<dbReference type="InterPro" id="IPR008824">
    <property type="entry name" value="RuvB-like_N"/>
</dbReference>
<dbReference type="InterPro" id="IPR008823">
    <property type="entry name" value="RuvB_C"/>
</dbReference>
<dbReference type="InterPro" id="IPR036388">
    <property type="entry name" value="WH-like_DNA-bd_sf"/>
</dbReference>
<dbReference type="InterPro" id="IPR036390">
    <property type="entry name" value="WH_DNA-bd_sf"/>
</dbReference>
<dbReference type="NCBIfam" id="NF000868">
    <property type="entry name" value="PRK00080.1"/>
    <property type="match status" value="1"/>
</dbReference>
<dbReference type="NCBIfam" id="TIGR00635">
    <property type="entry name" value="ruvB"/>
    <property type="match status" value="1"/>
</dbReference>
<dbReference type="PANTHER" id="PTHR42848">
    <property type="match status" value="1"/>
</dbReference>
<dbReference type="PANTHER" id="PTHR42848:SF1">
    <property type="entry name" value="HOLLIDAY JUNCTION BRANCH MIGRATION COMPLEX SUBUNIT RUVB"/>
    <property type="match status" value="1"/>
</dbReference>
<dbReference type="Pfam" id="PF17864">
    <property type="entry name" value="AAA_lid_4"/>
    <property type="match status" value="1"/>
</dbReference>
<dbReference type="Pfam" id="PF05491">
    <property type="entry name" value="RuvB_C"/>
    <property type="match status" value="1"/>
</dbReference>
<dbReference type="Pfam" id="PF05496">
    <property type="entry name" value="RuvB_N"/>
    <property type="match status" value="1"/>
</dbReference>
<dbReference type="SMART" id="SM00382">
    <property type="entry name" value="AAA"/>
    <property type="match status" value="1"/>
</dbReference>
<dbReference type="SUPFAM" id="SSF52540">
    <property type="entry name" value="P-loop containing nucleoside triphosphate hydrolases"/>
    <property type="match status" value="1"/>
</dbReference>
<dbReference type="SUPFAM" id="SSF46785">
    <property type="entry name" value="Winged helix' DNA-binding domain"/>
    <property type="match status" value="1"/>
</dbReference>
<reference key="1">
    <citation type="journal article" date="2006" name="Proc. Natl. Acad. Sci. U.S.A.">
        <title>Identification of genes subject to positive selection in uropathogenic strains of Escherichia coli: a comparative genomics approach.</title>
        <authorList>
            <person name="Chen S.L."/>
            <person name="Hung C.-S."/>
            <person name="Xu J."/>
            <person name="Reigstad C.S."/>
            <person name="Magrini V."/>
            <person name="Sabo A."/>
            <person name="Blasiar D."/>
            <person name="Bieri T."/>
            <person name="Meyer R.R."/>
            <person name="Ozersky P."/>
            <person name="Armstrong J.R."/>
            <person name="Fulton R.S."/>
            <person name="Latreille J.P."/>
            <person name="Spieth J."/>
            <person name="Hooton T.M."/>
            <person name="Mardis E.R."/>
            <person name="Hultgren S.J."/>
            <person name="Gordon J.I."/>
        </authorList>
    </citation>
    <scope>NUCLEOTIDE SEQUENCE [LARGE SCALE GENOMIC DNA]</scope>
    <source>
        <strain>UTI89 / UPEC</strain>
    </source>
</reference>
<accession>Q1RAS4</accession>
<name>RUVB_ECOUT</name>
<sequence length="336" mass="37174">MIEADRLISAGTTLPEDVADRAIRPKLLEEYVGQPQVRSQMEIFIKAAKLRGDALDHLLIFGPPGLGKTTLANIVANEMGVNLRTTSGPVLEKAGDLAAMLTNLEPHDVLFIDEIHRLSPVVEEVLYPAMEDYQLDIMIGEGPAARSIKIDLPPFTLIGATTRAGSLTSPLRDRFGIVQRLEFYQVPDLQYIVSRSARFMGLEMSDDGALEVARRARGTPRIANRLLRRVRDFAEVKHDGTISADIAAQALDMLNVDAEGFDYMDRKLLLAVIDKFFGGPVGLDNLAAAIGEERETIEDVLEPYLIQQGFLQRTPRGRMATTRAWNHFGITPPEMP</sequence>
<organism>
    <name type="scientific">Escherichia coli (strain UTI89 / UPEC)</name>
    <dbReference type="NCBI Taxonomy" id="364106"/>
    <lineage>
        <taxon>Bacteria</taxon>
        <taxon>Pseudomonadati</taxon>
        <taxon>Pseudomonadota</taxon>
        <taxon>Gammaproteobacteria</taxon>
        <taxon>Enterobacterales</taxon>
        <taxon>Enterobacteriaceae</taxon>
        <taxon>Escherichia</taxon>
    </lineage>
</organism>
<comment type="function">
    <text evidence="1">The RuvA-RuvB-RuvC complex processes Holliday junction (HJ) DNA during genetic recombination and DNA repair, while the RuvA-RuvB complex plays an important role in the rescue of blocked DNA replication forks via replication fork reversal (RFR). RuvA specifically binds to HJ cruciform DNA, conferring on it an open structure. The RuvB hexamer acts as an ATP-dependent pump, pulling dsDNA into and through the RuvAB complex. RuvB forms 2 homohexamers on either side of HJ DNA bound by 1 or 2 RuvA tetramers; 4 subunits per hexamer contact DNA at a time. Coordinated motions by a converter formed by DNA-disengaged RuvB subunits stimulates ATP hydrolysis and nucleotide exchange. Immobilization of the converter enables RuvB to convert the ATP-contained energy into a lever motion, pulling 2 nucleotides of DNA out of the RuvA tetramer per ATP hydrolyzed, thus driving DNA branch migration. The RuvB motors rotate together with the DNA substrate, which together with the progressing nucleotide cycle form the mechanistic basis for DNA recombination by continuous HJ branch migration. Branch migration allows RuvC to scan DNA until it finds its consensus sequence, where it cleaves and resolves cruciform DNA.</text>
</comment>
<comment type="catalytic activity">
    <reaction evidence="1">
        <text>ATP + H2O = ADP + phosphate + H(+)</text>
        <dbReference type="Rhea" id="RHEA:13065"/>
        <dbReference type="ChEBI" id="CHEBI:15377"/>
        <dbReference type="ChEBI" id="CHEBI:15378"/>
        <dbReference type="ChEBI" id="CHEBI:30616"/>
        <dbReference type="ChEBI" id="CHEBI:43474"/>
        <dbReference type="ChEBI" id="CHEBI:456216"/>
    </reaction>
</comment>
<comment type="subunit">
    <text evidence="1">Homohexamer. Forms an RuvA(8)-RuvB(12)-Holliday junction (HJ) complex. HJ DNA is sandwiched between 2 RuvA tetramers; dsDNA enters through RuvA and exits via RuvB. An RuvB hexamer assembles on each DNA strand where it exits the tetramer. Each RuvB hexamer is contacted by two RuvA subunits (via domain III) on 2 adjacent RuvB subunits; this complex drives branch migration. In the full resolvosome a probable DNA-RuvA(4)-RuvB(12)-RuvC(2) complex forms which resolves the HJ.</text>
</comment>
<comment type="subcellular location">
    <subcellularLocation>
        <location evidence="1">Cytoplasm</location>
    </subcellularLocation>
</comment>
<comment type="domain">
    <text evidence="1">Has 3 domains, the large (RuvB-L) and small ATPase (RuvB-S) domains and the C-terminal head (RuvB-H) domain. The head domain binds DNA, while the ATPase domains jointly bind ATP, ADP or are empty depending on the state of the subunit in the translocation cycle. During a single DNA translocation step the structure of each domain remains the same, but their relative positions change.</text>
</comment>
<comment type="similarity">
    <text evidence="1">Belongs to the RuvB family.</text>
</comment>
<evidence type="ECO:0000255" key="1">
    <source>
        <dbReference type="HAMAP-Rule" id="MF_00016"/>
    </source>
</evidence>
<feature type="chain" id="PRO_1000001401" description="Holliday junction branch migration complex subunit RuvB">
    <location>
        <begin position="1"/>
        <end position="336"/>
    </location>
</feature>
<feature type="region of interest" description="Large ATPase domain (RuvB-L)" evidence="1">
    <location>
        <begin position="4"/>
        <end position="184"/>
    </location>
</feature>
<feature type="region of interest" description="Small ATPAse domain (RuvB-S)" evidence="1">
    <location>
        <begin position="185"/>
        <end position="255"/>
    </location>
</feature>
<feature type="region of interest" description="Head domain (RuvB-H)" evidence="1">
    <location>
        <begin position="258"/>
        <end position="336"/>
    </location>
</feature>
<feature type="binding site" evidence="1">
    <location>
        <position position="23"/>
    </location>
    <ligand>
        <name>ATP</name>
        <dbReference type="ChEBI" id="CHEBI:30616"/>
    </ligand>
</feature>
<feature type="binding site" evidence="1">
    <location>
        <position position="24"/>
    </location>
    <ligand>
        <name>ATP</name>
        <dbReference type="ChEBI" id="CHEBI:30616"/>
    </ligand>
</feature>
<feature type="binding site" evidence="1">
    <location>
        <position position="65"/>
    </location>
    <ligand>
        <name>ATP</name>
        <dbReference type="ChEBI" id="CHEBI:30616"/>
    </ligand>
</feature>
<feature type="binding site" evidence="1">
    <location>
        <position position="68"/>
    </location>
    <ligand>
        <name>ATP</name>
        <dbReference type="ChEBI" id="CHEBI:30616"/>
    </ligand>
</feature>
<feature type="binding site" evidence="1">
    <location>
        <position position="69"/>
    </location>
    <ligand>
        <name>ATP</name>
        <dbReference type="ChEBI" id="CHEBI:30616"/>
    </ligand>
</feature>
<feature type="binding site" evidence="1">
    <location>
        <position position="69"/>
    </location>
    <ligand>
        <name>Mg(2+)</name>
        <dbReference type="ChEBI" id="CHEBI:18420"/>
    </ligand>
</feature>
<feature type="binding site" evidence="1">
    <location>
        <position position="70"/>
    </location>
    <ligand>
        <name>ATP</name>
        <dbReference type="ChEBI" id="CHEBI:30616"/>
    </ligand>
</feature>
<feature type="binding site" evidence="1">
    <location>
        <begin position="131"/>
        <end position="133"/>
    </location>
    <ligand>
        <name>ATP</name>
        <dbReference type="ChEBI" id="CHEBI:30616"/>
    </ligand>
</feature>
<feature type="binding site" evidence="1">
    <location>
        <position position="174"/>
    </location>
    <ligand>
        <name>ATP</name>
        <dbReference type="ChEBI" id="CHEBI:30616"/>
    </ligand>
</feature>
<feature type="binding site" evidence="1">
    <location>
        <position position="184"/>
    </location>
    <ligand>
        <name>ATP</name>
        <dbReference type="ChEBI" id="CHEBI:30616"/>
    </ligand>
</feature>
<feature type="binding site" evidence="1">
    <location>
        <position position="221"/>
    </location>
    <ligand>
        <name>ATP</name>
        <dbReference type="ChEBI" id="CHEBI:30616"/>
    </ligand>
</feature>
<feature type="binding site" evidence="1">
    <location>
        <position position="294"/>
    </location>
    <ligand>
        <name>DNA</name>
        <dbReference type="ChEBI" id="CHEBI:16991"/>
    </ligand>
</feature>
<feature type="binding site" evidence="1">
    <location>
        <position position="313"/>
    </location>
    <ligand>
        <name>DNA</name>
        <dbReference type="ChEBI" id="CHEBI:16991"/>
    </ligand>
</feature>
<feature type="binding site" evidence="1">
    <location>
        <position position="318"/>
    </location>
    <ligand>
        <name>DNA</name>
        <dbReference type="ChEBI" id="CHEBI:16991"/>
    </ligand>
</feature>
<gene>
    <name evidence="1" type="primary">ruvB</name>
    <name type="ordered locus">UTI89_C2064</name>
</gene>